<dbReference type="EMBL" id="BC146178">
    <property type="protein sequence ID" value="AAI46179.1"/>
    <property type="molecule type" value="mRNA"/>
</dbReference>
<dbReference type="RefSeq" id="NP_001092653.1">
    <property type="nucleotide sequence ID" value="NM_001099183.1"/>
</dbReference>
<dbReference type="BMRB" id="A6H7B1"/>
<dbReference type="SMR" id="A6H7B1"/>
<dbReference type="FunCoup" id="A6H7B1">
    <property type="interactions" value="3285"/>
</dbReference>
<dbReference type="STRING" id="9913.ENSBTAP00000000733"/>
<dbReference type="PaxDb" id="9913-ENSBTAP00000000733"/>
<dbReference type="Ensembl" id="ENSBTAT00000000733.6">
    <property type="protein sequence ID" value="ENSBTAP00000000733.5"/>
    <property type="gene ID" value="ENSBTAG00000000562.6"/>
</dbReference>
<dbReference type="GeneID" id="781575"/>
<dbReference type="KEGG" id="bta:781575"/>
<dbReference type="CTD" id="9804"/>
<dbReference type="VEuPathDB" id="HostDB:ENSBTAG00000000562"/>
<dbReference type="VGNC" id="VGNC:55995">
    <property type="gene designation" value="TOMM20"/>
</dbReference>
<dbReference type="eggNOG" id="KOG4056">
    <property type="taxonomic scope" value="Eukaryota"/>
</dbReference>
<dbReference type="GeneTree" id="ENSGT00390000011698"/>
<dbReference type="HOGENOM" id="CLU_100000_0_0_1"/>
<dbReference type="InParanoid" id="A6H7B1"/>
<dbReference type="OMA" id="PPPIFQI"/>
<dbReference type="OrthoDB" id="2154253at2759"/>
<dbReference type="TreeFam" id="TF106200"/>
<dbReference type="Reactome" id="R-BTA-5205685">
    <property type="pathway name" value="PINK1-PRKN Mediated Mitophagy"/>
</dbReference>
<dbReference type="Reactome" id="R-BTA-5689880">
    <property type="pathway name" value="Ub-specific processing proteases"/>
</dbReference>
<dbReference type="Proteomes" id="UP000009136">
    <property type="component" value="Chromosome 28"/>
</dbReference>
<dbReference type="Bgee" id="ENSBTAG00000000562">
    <property type="expression patterns" value="Expressed in spermatocyte and 105 other cell types or tissues"/>
</dbReference>
<dbReference type="GO" id="GO:0005742">
    <property type="term" value="C:mitochondrial outer membrane translocase complex"/>
    <property type="evidence" value="ECO:0000318"/>
    <property type="project" value="GO_Central"/>
</dbReference>
<dbReference type="GO" id="GO:0097225">
    <property type="term" value="C:sperm midpiece"/>
    <property type="evidence" value="ECO:0000250"/>
    <property type="project" value="UniProtKB"/>
</dbReference>
<dbReference type="GO" id="GO:0030943">
    <property type="term" value="F:mitochondrion targeting sequence binding"/>
    <property type="evidence" value="ECO:0000318"/>
    <property type="project" value="GO_Central"/>
</dbReference>
<dbReference type="GO" id="GO:0006886">
    <property type="term" value="P:intracellular protein transport"/>
    <property type="evidence" value="ECO:0007669"/>
    <property type="project" value="InterPro"/>
</dbReference>
<dbReference type="GO" id="GO:0030150">
    <property type="term" value="P:protein import into mitochondrial matrix"/>
    <property type="evidence" value="ECO:0000318"/>
    <property type="project" value="GO_Central"/>
</dbReference>
<dbReference type="GO" id="GO:0006626">
    <property type="term" value="P:protein targeting to mitochondrion"/>
    <property type="evidence" value="ECO:0000250"/>
    <property type="project" value="UniProtKB"/>
</dbReference>
<dbReference type="GO" id="GO:0016031">
    <property type="term" value="P:tRNA import into mitochondrion"/>
    <property type="evidence" value="ECO:0000318"/>
    <property type="project" value="GO_Central"/>
</dbReference>
<dbReference type="FunFam" id="1.20.960.10:FF:000001">
    <property type="entry name" value="Mitochondrial import receptor subunit TOM20 homolog"/>
    <property type="match status" value="1"/>
</dbReference>
<dbReference type="Gene3D" id="1.20.960.10">
    <property type="entry name" value="Mitochondrial outer membrane translocase complex, subunit Tom20 domain"/>
    <property type="match status" value="1"/>
</dbReference>
<dbReference type="InterPro" id="IPR002056">
    <property type="entry name" value="MAS20"/>
</dbReference>
<dbReference type="InterPro" id="IPR022422">
    <property type="entry name" value="MAS20_rcpt_metazoan"/>
</dbReference>
<dbReference type="InterPro" id="IPR023392">
    <property type="entry name" value="Tom20_dom_sf"/>
</dbReference>
<dbReference type="NCBIfam" id="TIGR00985">
    <property type="entry name" value="3a0801s04tom"/>
    <property type="match status" value="1"/>
</dbReference>
<dbReference type="PANTHER" id="PTHR12430">
    <property type="entry name" value="MITOCHONDRIAL IMPORT RECEPTOR SUBUNIT TOM20"/>
    <property type="match status" value="1"/>
</dbReference>
<dbReference type="PANTHER" id="PTHR12430:SF2">
    <property type="entry name" value="MITOCHONDRIAL IMPORT RECEPTOR SUBUNIT TOM20 HOMOLOG"/>
    <property type="match status" value="1"/>
</dbReference>
<dbReference type="Pfam" id="PF02064">
    <property type="entry name" value="MAS20"/>
    <property type="match status" value="1"/>
</dbReference>
<dbReference type="PIRSF" id="PIRSF037707">
    <property type="entry name" value="MAS20_rcpt"/>
    <property type="match status" value="1"/>
</dbReference>
<dbReference type="PRINTS" id="PR01989">
    <property type="entry name" value="EUOM20RECPTR"/>
</dbReference>
<dbReference type="PRINTS" id="PR00351">
    <property type="entry name" value="OM20RECEPTOR"/>
</dbReference>
<dbReference type="SUPFAM" id="SSF47157">
    <property type="entry name" value="Mitochondrial import receptor subunit Tom20"/>
    <property type="match status" value="1"/>
</dbReference>
<accession>A6H7B1</accession>
<protein>
    <recommendedName>
        <fullName>Mitochondrial import receptor subunit TOM20 homolog</fullName>
    </recommendedName>
    <alternativeName>
        <fullName>Mitochondrial 20 kDa outer membrane protein</fullName>
    </alternativeName>
    <alternativeName>
        <fullName>Outer mitochondrial membrane receptor Tom20</fullName>
    </alternativeName>
</protein>
<comment type="function">
    <text evidence="1 3">Central component of the receptor complex responsible for the recognition and translocation of cytosolically synthesized mitochondrial preproteins. Together with TOM22 functions as the transit peptide receptor at the surface of the mitochondrion outer membrane and facilitates the movement of preproteins into the TOM40 translocation pore (By similarity). Required for the translocation across the mitochondrial outer membrane of cytochrome P450 monooxygenases.</text>
</comment>
<comment type="subunit">
    <text evidence="2 4">Forms part of the preprotein translocase complex of the outer mitochondrial membrane (TOM complex) which consists of at least 7 different proteins (TOMM5, TOMM6, TOMM7, TOMM20, TOMM22, TOMM40 and TOMM70). Interacts with TOM22. Interacts with APEX1 (By similarity). Interacts with TBC1D21 (By similarity). Upon mitochondrial depolarization, interacts with PINK1; the interaction is required for PINK1-TOM-TIM23 supercomplex formation which is critical for PINK1 stabilization at the outer mitochondrial membrane, kinase activation and downstream mitophagy (By similarity).</text>
</comment>
<comment type="subcellular location">
    <subcellularLocation>
        <location evidence="2">Mitochondrion outer membrane</location>
        <topology evidence="5">Single-pass membrane protein</topology>
    </subcellularLocation>
</comment>
<comment type="PTM">
    <text evidence="2">Ubiquitinated by PRKN during mitophagy, leading to its degradation and enhancement of mitophagy. Deubiquitinated by USP30.</text>
</comment>
<comment type="similarity">
    <text evidence="6">Belongs to the Tom20 family.</text>
</comment>
<proteinExistence type="evidence at transcript level"/>
<organism>
    <name type="scientific">Bos taurus</name>
    <name type="common">Bovine</name>
    <dbReference type="NCBI Taxonomy" id="9913"/>
    <lineage>
        <taxon>Eukaryota</taxon>
        <taxon>Metazoa</taxon>
        <taxon>Chordata</taxon>
        <taxon>Craniata</taxon>
        <taxon>Vertebrata</taxon>
        <taxon>Euteleostomi</taxon>
        <taxon>Mammalia</taxon>
        <taxon>Eutheria</taxon>
        <taxon>Laurasiatheria</taxon>
        <taxon>Artiodactyla</taxon>
        <taxon>Ruminantia</taxon>
        <taxon>Pecora</taxon>
        <taxon>Bovidae</taxon>
        <taxon>Bovinae</taxon>
        <taxon>Bos</taxon>
    </lineage>
</organism>
<gene>
    <name type="primary">TOMM20</name>
</gene>
<name>TOM20_BOVIN</name>
<keyword id="KW-1017">Isopeptide bond</keyword>
<keyword id="KW-0472">Membrane</keyword>
<keyword id="KW-0496">Mitochondrion</keyword>
<keyword id="KW-1000">Mitochondrion outer membrane</keyword>
<keyword id="KW-0597">Phosphoprotein</keyword>
<keyword id="KW-0653">Protein transport</keyword>
<keyword id="KW-1185">Reference proteome</keyword>
<keyword id="KW-0812">Transmembrane</keyword>
<keyword id="KW-1133">Transmembrane helix</keyword>
<keyword id="KW-0813">Transport</keyword>
<keyword id="KW-0832">Ubl conjugation</keyword>
<sequence length="145" mass="16298">MVGRNSAIAAGVCGALFIGYCIYFDRKRRSDPNFKNRLRERRKKQKLAKERAGLSKLPDLKDAEAVQKFFLEEIQLGEELLAQGEYEKGVDHLTNAIAVCGQPQQLLQVLQQTLPPPVFQMLLTKLPTISQRIVSAQSLAEDDVE</sequence>
<feature type="chain" id="PRO_0000317743" description="Mitochondrial import receptor subunit TOM20 homolog">
    <location>
        <begin position="1"/>
        <end position="145"/>
    </location>
</feature>
<feature type="topological domain" description="Mitochondrial intermembrane" evidence="5">
    <location>
        <begin position="1"/>
        <end position="6"/>
    </location>
</feature>
<feature type="transmembrane region" description="Helical" evidence="5">
    <location>
        <begin position="7"/>
        <end position="24"/>
    </location>
</feature>
<feature type="topological domain" description="Cytoplasmic" evidence="5">
    <location>
        <begin position="25"/>
        <end position="145"/>
    </location>
</feature>
<feature type="modified residue" description="Phosphoserine" evidence="2">
    <location>
        <position position="135"/>
    </location>
</feature>
<feature type="modified residue" description="Phosphoserine" evidence="2">
    <location>
        <position position="138"/>
    </location>
</feature>
<feature type="cross-link" description="Glycyl lysine isopeptide (Lys-Gly) (interchain with G-Cter in ubiquitin)" evidence="2">
    <location>
        <position position="35"/>
    </location>
</feature>
<feature type="cross-link" description="Glycyl lysine isopeptide (Lys-Gly) (interchain with G-Cter in ubiquitin)" evidence="2">
    <location>
        <position position="56"/>
    </location>
</feature>
<feature type="cross-link" description="Glycyl lysine isopeptide (Lys-Gly) (interchain with G-Cter in ubiquitin)" evidence="2">
    <location>
        <position position="61"/>
    </location>
</feature>
<feature type="cross-link" description="Glycyl lysine isopeptide (Lys-Gly) (interchain with G-Cter in ubiquitin)" evidence="2">
    <location>
        <position position="68"/>
    </location>
</feature>
<reference key="1">
    <citation type="submission" date="2007-06" db="EMBL/GenBank/DDBJ databases">
        <authorList>
            <consortium name="NIH - Mammalian Gene Collection (MGC) project"/>
        </authorList>
    </citation>
    <scope>NUCLEOTIDE SEQUENCE [LARGE SCALE MRNA]</scope>
    <source>
        <strain>Hereford</strain>
        <tissue>Fetal muscle</tissue>
    </source>
</reference>
<evidence type="ECO:0000250" key="1"/>
<evidence type="ECO:0000250" key="2">
    <source>
        <dbReference type="UniProtKB" id="Q15388"/>
    </source>
</evidence>
<evidence type="ECO:0000250" key="3">
    <source>
        <dbReference type="UniProtKB" id="Q62760"/>
    </source>
</evidence>
<evidence type="ECO:0000250" key="4">
    <source>
        <dbReference type="UniProtKB" id="Q9DCC8"/>
    </source>
</evidence>
<evidence type="ECO:0000255" key="5"/>
<evidence type="ECO:0000305" key="6"/>